<keyword id="KW-1185">Reference proteome</keyword>
<proteinExistence type="inferred from homology"/>
<protein>
    <recommendedName>
        <fullName evidence="1">UPF0225 protein PSPTO_4127</fullName>
    </recommendedName>
</protein>
<dbReference type="EMBL" id="AE016853">
    <property type="protein sequence ID" value="AAO57583.1"/>
    <property type="molecule type" value="Genomic_DNA"/>
</dbReference>
<dbReference type="RefSeq" id="NP_793888.1">
    <property type="nucleotide sequence ID" value="NC_004578.1"/>
</dbReference>
<dbReference type="RefSeq" id="WP_005764906.1">
    <property type="nucleotide sequence ID" value="NC_004578.1"/>
</dbReference>
<dbReference type="SMR" id="Q87XP9"/>
<dbReference type="STRING" id="223283.PSPTO_4127"/>
<dbReference type="GeneID" id="1185807"/>
<dbReference type="KEGG" id="pst:PSPTO_4127"/>
<dbReference type="PATRIC" id="fig|223283.9.peg.4233"/>
<dbReference type="eggNOG" id="COG3012">
    <property type="taxonomic scope" value="Bacteria"/>
</dbReference>
<dbReference type="HOGENOM" id="CLU_099590_0_1_6"/>
<dbReference type="OrthoDB" id="21421at2"/>
<dbReference type="PhylomeDB" id="Q87XP9"/>
<dbReference type="Proteomes" id="UP000002515">
    <property type="component" value="Chromosome"/>
</dbReference>
<dbReference type="Gene3D" id="3.10.450.50">
    <property type="match status" value="1"/>
</dbReference>
<dbReference type="HAMAP" id="MF_00612">
    <property type="entry name" value="UPF0225"/>
    <property type="match status" value="1"/>
</dbReference>
<dbReference type="InterPro" id="IPR032710">
    <property type="entry name" value="NTF2-like_dom_sf"/>
</dbReference>
<dbReference type="InterPro" id="IPR004027">
    <property type="entry name" value="SEC_C_motif"/>
</dbReference>
<dbReference type="InterPro" id="IPR023006">
    <property type="entry name" value="UPF0225"/>
</dbReference>
<dbReference type="InterPro" id="IPR048469">
    <property type="entry name" value="YchJ-like_M"/>
</dbReference>
<dbReference type="NCBIfam" id="NF001213">
    <property type="entry name" value="PRK00183.1"/>
    <property type="match status" value="1"/>
</dbReference>
<dbReference type="NCBIfam" id="NF002449">
    <property type="entry name" value="PRK01617.1"/>
    <property type="match status" value="1"/>
</dbReference>
<dbReference type="NCBIfam" id="NF002486">
    <property type="entry name" value="PRK01752.1"/>
    <property type="match status" value="1"/>
</dbReference>
<dbReference type="PANTHER" id="PTHR33747:SF1">
    <property type="entry name" value="ADENYLATE CYCLASE-ASSOCIATED CAP C-TERMINAL DOMAIN-CONTAINING PROTEIN"/>
    <property type="match status" value="1"/>
</dbReference>
<dbReference type="PANTHER" id="PTHR33747">
    <property type="entry name" value="UPF0225 PROTEIN SCO1677"/>
    <property type="match status" value="1"/>
</dbReference>
<dbReference type="Pfam" id="PF02810">
    <property type="entry name" value="SEC-C"/>
    <property type="match status" value="1"/>
</dbReference>
<dbReference type="Pfam" id="PF17775">
    <property type="entry name" value="YchJ_M-like"/>
    <property type="match status" value="1"/>
</dbReference>
<dbReference type="SUPFAM" id="SSF54427">
    <property type="entry name" value="NTF2-like"/>
    <property type="match status" value="1"/>
</dbReference>
<dbReference type="SUPFAM" id="SSF103642">
    <property type="entry name" value="Sec-C motif"/>
    <property type="match status" value="1"/>
</dbReference>
<feature type="chain" id="PRO_0000071811" description="UPF0225 protein PSPTO_4127">
    <location>
        <begin position="1"/>
        <end position="157"/>
    </location>
</feature>
<accession>Q87XP9</accession>
<comment type="similarity">
    <text evidence="1">Belongs to the UPF0225 family.</text>
</comment>
<name>Y4127_PSESM</name>
<reference key="1">
    <citation type="journal article" date="2003" name="Proc. Natl. Acad. Sci. U.S.A.">
        <title>The complete genome sequence of the Arabidopsis and tomato pathogen Pseudomonas syringae pv. tomato DC3000.</title>
        <authorList>
            <person name="Buell C.R."/>
            <person name="Joardar V."/>
            <person name="Lindeberg M."/>
            <person name="Selengut J."/>
            <person name="Paulsen I.T."/>
            <person name="Gwinn M.L."/>
            <person name="Dodson R.J."/>
            <person name="DeBoy R.T."/>
            <person name="Durkin A.S."/>
            <person name="Kolonay J.F."/>
            <person name="Madupu R."/>
            <person name="Daugherty S.C."/>
            <person name="Brinkac L.M."/>
            <person name="Beanan M.J."/>
            <person name="Haft D.H."/>
            <person name="Nelson W.C."/>
            <person name="Davidsen T.M."/>
            <person name="Zafar N."/>
            <person name="Zhou L."/>
            <person name="Liu J."/>
            <person name="Yuan Q."/>
            <person name="Khouri H.M."/>
            <person name="Fedorova N.B."/>
            <person name="Tran B."/>
            <person name="Russell D."/>
            <person name="Berry K.J."/>
            <person name="Utterback T.R."/>
            <person name="Van Aken S.E."/>
            <person name="Feldblyum T.V."/>
            <person name="D'Ascenzo M."/>
            <person name="Deng W.-L."/>
            <person name="Ramos A.R."/>
            <person name="Alfano J.R."/>
            <person name="Cartinhour S."/>
            <person name="Chatterjee A.K."/>
            <person name="Delaney T.P."/>
            <person name="Lazarowitz S.G."/>
            <person name="Martin G.B."/>
            <person name="Schneider D.J."/>
            <person name="Tang X."/>
            <person name="Bender C.L."/>
            <person name="White O."/>
            <person name="Fraser C.M."/>
            <person name="Collmer A."/>
        </authorList>
    </citation>
    <scope>NUCLEOTIDE SEQUENCE [LARGE SCALE GENOMIC DNA]</scope>
    <source>
        <strain>ATCC BAA-871 / DC3000</strain>
    </source>
</reference>
<evidence type="ECO:0000255" key="1">
    <source>
        <dbReference type="HAMAP-Rule" id="MF_00612"/>
    </source>
</evidence>
<sequence length="157" mass="17169">MSSAICPCGSGDLLLACCGHYHAGQPAPCAEKLMRSRYSAYVLGLTDYLVQTTLPVQQAALDREAIAQWSAQSTWLGLEVESAEVLGGKPEHAFVTFTARWHDGNGEHSHKERSSFVQNQGHWYFIDSTVPLKAGRNDGCPCGSEQKFKKCCSAYVI</sequence>
<organism>
    <name type="scientific">Pseudomonas syringae pv. tomato (strain ATCC BAA-871 / DC3000)</name>
    <dbReference type="NCBI Taxonomy" id="223283"/>
    <lineage>
        <taxon>Bacteria</taxon>
        <taxon>Pseudomonadati</taxon>
        <taxon>Pseudomonadota</taxon>
        <taxon>Gammaproteobacteria</taxon>
        <taxon>Pseudomonadales</taxon>
        <taxon>Pseudomonadaceae</taxon>
        <taxon>Pseudomonas</taxon>
    </lineage>
</organism>
<gene>
    <name type="ordered locus">PSPTO_4127</name>
</gene>